<name>RLR06_PLAHL</name>
<reference key="1">
    <citation type="journal article" date="2015" name="BMC Genomics">
        <title>Genome analyses of the sunflower pathogen Plasmopara halstedii provide insights into effector evolution in downy mildews and Phytophthora.</title>
        <authorList>
            <person name="Sharma R."/>
            <person name="Xia X."/>
            <person name="Cano L.M."/>
            <person name="Evangelisti E."/>
            <person name="Kemen E."/>
            <person name="Judelson H."/>
            <person name="Oome S."/>
            <person name="Sambles C."/>
            <person name="van den Hoogen D.J."/>
            <person name="Kitner M."/>
            <person name="Klein J."/>
            <person name="Meijer H.J."/>
            <person name="Spring O."/>
            <person name="Win J."/>
            <person name="Zipper R."/>
            <person name="Bode H.B."/>
            <person name="Govers F."/>
            <person name="Kamoun S."/>
            <person name="Schornack S."/>
            <person name="Studholme D.J."/>
            <person name="Van den Ackerveken G."/>
            <person name="Thines M."/>
        </authorList>
    </citation>
    <scope>NUCLEOTIDE SEQUENCE [LARGE SCALE GENOMIC DNA]</scope>
</reference>
<reference key="2">
    <citation type="journal article" date="2019" name="Plant J.">
        <title>Sunflower resistance to multiple downy mildew pathotypes revealed by recognition of conserved effectors of the oomycete Plasmopara halstedii.</title>
        <authorList>
            <person name="Pecrix Y."/>
            <person name="Buendia L."/>
            <person name="Penouilh-Suzette C."/>
            <person name="Marechaux M."/>
            <person name="Legrand L."/>
            <person name="Bouchez O."/>
            <person name="Rengel D."/>
            <person name="Gouzy J."/>
            <person name="Cottret L."/>
            <person name="Vear F."/>
            <person name="Godiard L."/>
        </authorList>
    </citation>
    <scope>DOMAIN</scope>
    <scope>INDUCTION</scope>
    <scope>FUNCTION</scope>
    <scope>SUBCELLULAR LOCATION</scope>
</reference>
<dbReference type="EMBL" id="CCYD01001640">
    <property type="protein sequence ID" value="CEG45744.1"/>
    <property type="molecule type" value="Genomic_DNA"/>
</dbReference>
<dbReference type="GlyCosmos" id="A0A0P1AXF0">
    <property type="glycosylation" value="3 sites, No reported glycans"/>
</dbReference>
<dbReference type="EnsemblProtists" id="CEG45744">
    <property type="protein sequence ID" value="CEG45744"/>
    <property type="gene ID" value="CEG45744"/>
</dbReference>
<dbReference type="Proteomes" id="UP000054928">
    <property type="component" value="Unassembled WGS sequence"/>
</dbReference>
<dbReference type="GO" id="GO:0005576">
    <property type="term" value="C:extracellular region"/>
    <property type="evidence" value="ECO:0007669"/>
    <property type="project" value="UniProtKB-SubCell"/>
</dbReference>
<dbReference type="GO" id="GO:0044177">
    <property type="term" value="C:host cell Golgi apparatus"/>
    <property type="evidence" value="ECO:0007669"/>
    <property type="project" value="UniProtKB-SubCell"/>
</dbReference>
<dbReference type="PROSITE" id="PS50096">
    <property type="entry name" value="IQ"/>
    <property type="match status" value="1"/>
</dbReference>
<proteinExistence type="evidence at transcript level"/>
<accession>A0A0P1AXF0</accession>
<feature type="signal peptide" evidence="1">
    <location>
        <begin position="1"/>
        <end position="22"/>
    </location>
</feature>
<feature type="chain" id="PRO_5006059009" description="Secreted RxLR effector protein RXLR-C06">
    <location>
        <begin position="23"/>
        <end position="168"/>
    </location>
</feature>
<feature type="domain" description="IQ" evidence="2">
    <location>
        <begin position="78"/>
        <end position="107"/>
    </location>
</feature>
<feature type="region of interest" description="Disordered" evidence="4">
    <location>
        <begin position="25"/>
        <end position="52"/>
    </location>
</feature>
<feature type="short sequence motif" description="RxLR-dEER" evidence="8">
    <location>
        <begin position="46"/>
        <end position="63"/>
    </location>
</feature>
<feature type="compositionally biased region" description="Polar residues" evidence="4">
    <location>
        <begin position="32"/>
        <end position="50"/>
    </location>
</feature>
<feature type="glycosylation site" description="N-linked (GlcNAc...) asparagine" evidence="3">
    <location>
        <position position="37"/>
    </location>
</feature>
<feature type="glycosylation site" description="N-linked (GlcNAc...) asparagine" evidence="3">
    <location>
        <position position="42"/>
    </location>
</feature>
<feature type="glycosylation site" description="N-linked (GlcNAc...) asparagine" evidence="3">
    <location>
        <position position="105"/>
    </location>
</feature>
<organism>
    <name type="scientific">Plasmopara halstedii</name>
    <name type="common">Downy mildew of sunflower</name>
    <dbReference type="NCBI Taxonomy" id="4781"/>
    <lineage>
        <taxon>Eukaryota</taxon>
        <taxon>Sar</taxon>
        <taxon>Stramenopiles</taxon>
        <taxon>Oomycota</taxon>
        <taxon>Peronosporales</taxon>
        <taxon>Peronosporaceae</taxon>
        <taxon>Plasmopara</taxon>
    </lineage>
</organism>
<protein>
    <recommendedName>
        <fullName evidence="6">Secreted RxLR effector protein RXLR-C06</fullName>
    </recommendedName>
</protein>
<keyword id="KW-0325">Glycoprotein</keyword>
<keyword id="KW-1040">Host Golgi apparatus</keyword>
<keyword id="KW-1185">Reference proteome</keyword>
<keyword id="KW-0964">Secreted</keyword>
<keyword id="KW-0732">Signal</keyword>
<keyword id="KW-0843">Virulence</keyword>
<gene>
    <name evidence="6" type="primary">RXLR-C06</name>
</gene>
<comment type="function">
    <text evidence="5">Secreted effector that suppresses pattern-triggered immunity (PTI) in plant host.</text>
</comment>
<comment type="subcellular location">
    <subcellularLocation>
        <location evidence="5">Secreted</location>
    </subcellularLocation>
    <subcellularLocation>
        <location evidence="5">Host Golgi apparatus</location>
    </subcellularLocation>
</comment>
<comment type="induction">
    <text evidence="5">Expression is up-regulated in spores.</text>
</comment>
<comment type="domain">
    <text evidence="8">The RxLR-dEER motif acts to carry the protein into the host cell cytoplasm through binding to cell surface phosphatidylinositol-3-phosphate.</text>
</comment>
<comment type="similarity">
    <text evidence="7">Belongs to the RxLR effector family.</text>
</comment>
<evidence type="ECO:0000255" key="1"/>
<evidence type="ECO:0000255" key="2">
    <source>
        <dbReference type="PROSITE-ProRule" id="PRU00116"/>
    </source>
</evidence>
<evidence type="ECO:0000255" key="3">
    <source>
        <dbReference type="PROSITE-ProRule" id="PRU00498"/>
    </source>
</evidence>
<evidence type="ECO:0000256" key="4">
    <source>
        <dbReference type="SAM" id="MobiDB-lite"/>
    </source>
</evidence>
<evidence type="ECO:0000269" key="5">
    <source>
    </source>
</evidence>
<evidence type="ECO:0000303" key="6">
    <source>
    </source>
</evidence>
<evidence type="ECO:0000305" key="7"/>
<evidence type="ECO:0000305" key="8">
    <source>
    </source>
</evidence>
<sequence>MRIQLLWLSFAVLSTILSTCDATSDKLDPQRVQPNQNGSGHNQSIRSALKTSHGKTIADDEERFISLSGMSEKIAKYYKAIVAKLSKYFRDYHERREIRKQRILNKSFAEMMAGQKSVEDIGRNQDASFMSSSFLWTPEAFKSILHKYALFLYKYGNGHLATVPVKTG</sequence>